<gene>
    <name evidence="1" type="primary">metK</name>
    <name type="ordered locus">Mmwyl1_4320</name>
</gene>
<evidence type="ECO:0000255" key="1">
    <source>
        <dbReference type="HAMAP-Rule" id="MF_00086"/>
    </source>
</evidence>
<comment type="function">
    <text evidence="1">Catalyzes the formation of S-adenosylmethionine (AdoMet) from methionine and ATP. The overall synthetic reaction is composed of two sequential steps, AdoMet formation and the subsequent tripolyphosphate hydrolysis which occurs prior to release of AdoMet from the enzyme.</text>
</comment>
<comment type="catalytic activity">
    <reaction evidence="1">
        <text>L-methionine + ATP + H2O = S-adenosyl-L-methionine + phosphate + diphosphate</text>
        <dbReference type="Rhea" id="RHEA:21080"/>
        <dbReference type="ChEBI" id="CHEBI:15377"/>
        <dbReference type="ChEBI" id="CHEBI:30616"/>
        <dbReference type="ChEBI" id="CHEBI:33019"/>
        <dbReference type="ChEBI" id="CHEBI:43474"/>
        <dbReference type="ChEBI" id="CHEBI:57844"/>
        <dbReference type="ChEBI" id="CHEBI:59789"/>
        <dbReference type="EC" id="2.5.1.6"/>
    </reaction>
</comment>
<comment type="cofactor">
    <cofactor evidence="1">
        <name>Mg(2+)</name>
        <dbReference type="ChEBI" id="CHEBI:18420"/>
    </cofactor>
    <text evidence="1">Binds 2 divalent ions per subunit.</text>
</comment>
<comment type="cofactor">
    <cofactor evidence="1">
        <name>K(+)</name>
        <dbReference type="ChEBI" id="CHEBI:29103"/>
    </cofactor>
    <text evidence="1">Binds 1 potassium ion per subunit.</text>
</comment>
<comment type="pathway">
    <text evidence="1">Amino-acid biosynthesis; S-adenosyl-L-methionine biosynthesis; S-adenosyl-L-methionine from L-methionine: step 1/1.</text>
</comment>
<comment type="subunit">
    <text evidence="1">Homotetramer; dimer of dimers.</text>
</comment>
<comment type="subcellular location">
    <subcellularLocation>
        <location evidence="1">Cytoplasm</location>
    </subcellularLocation>
</comment>
<comment type="similarity">
    <text evidence="1">Belongs to the AdoMet synthase family.</text>
</comment>
<proteinExistence type="inferred from homology"/>
<keyword id="KW-0067">ATP-binding</keyword>
<keyword id="KW-0963">Cytoplasm</keyword>
<keyword id="KW-0460">Magnesium</keyword>
<keyword id="KW-0479">Metal-binding</keyword>
<keyword id="KW-0547">Nucleotide-binding</keyword>
<keyword id="KW-0554">One-carbon metabolism</keyword>
<keyword id="KW-0630">Potassium</keyword>
<keyword id="KW-0808">Transferase</keyword>
<dbReference type="EC" id="2.5.1.6" evidence="1"/>
<dbReference type="EMBL" id="CP000749">
    <property type="protein sequence ID" value="ABR73215.1"/>
    <property type="molecule type" value="Genomic_DNA"/>
</dbReference>
<dbReference type="SMR" id="A6W3D6"/>
<dbReference type="STRING" id="400668.Mmwyl1_4320"/>
<dbReference type="KEGG" id="mmw:Mmwyl1_4320"/>
<dbReference type="eggNOG" id="COG0192">
    <property type="taxonomic scope" value="Bacteria"/>
</dbReference>
<dbReference type="HOGENOM" id="CLU_041802_1_1_6"/>
<dbReference type="OrthoDB" id="9801686at2"/>
<dbReference type="UniPathway" id="UPA00315">
    <property type="reaction ID" value="UER00080"/>
</dbReference>
<dbReference type="GO" id="GO:0005737">
    <property type="term" value="C:cytoplasm"/>
    <property type="evidence" value="ECO:0007669"/>
    <property type="project" value="UniProtKB-SubCell"/>
</dbReference>
<dbReference type="GO" id="GO:0005524">
    <property type="term" value="F:ATP binding"/>
    <property type="evidence" value="ECO:0007669"/>
    <property type="project" value="UniProtKB-UniRule"/>
</dbReference>
<dbReference type="GO" id="GO:0000287">
    <property type="term" value="F:magnesium ion binding"/>
    <property type="evidence" value="ECO:0007669"/>
    <property type="project" value="UniProtKB-UniRule"/>
</dbReference>
<dbReference type="GO" id="GO:0004478">
    <property type="term" value="F:methionine adenosyltransferase activity"/>
    <property type="evidence" value="ECO:0007669"/>
    <property type="project" value="UniProtKB-UniRule"/>
</dbReference>
<dbReference type="GO" id="GO:0006730">
    <property type="term" value="P:one-carbon metabolic process"/>
    <property type="evidence" value="ECO:0007669"/>
    <property type="project" value="UniProtKB-KW"/>
</dbReference>
<dbReference type="GO" id="GO:0006556">
    <property type="term" value="P:S-adenosylmethionine biosynthetic process"/>
    <property type="evidence" value="ECO:0007669"/>
    <property type="project" value="UniProtKB-UniRule"/>
</dbReference>
<dbReference type="CDD" id="cd18079">
    <property type="entry name" value="S-AdoMet_synt"/>
    <property type="match status" value="1"/>
</dbReference>
<dbReference type="FunFam" id="3.30.300.10:FF:000003">
    <property type="entry name" value="S-adenosylmethionine synthase"/>
    <property type="match status" value="1"/>
</dbReference>
<dbReference type="FunFam" id="3.30.300.10:FF:000004">
    <property type="entry name" value="S-adenosylmethionine synthase"/>
    <property type="match status" value="1"/>
</dbReference>
<dbReference type="Gene3D" id="3.30.300.10">
    <property type="match status" value="3"/>
</dbReference>
<dbReference type="HAMAP" id="MF_00086">
    <property type="entry name" value="S_AdoMet_synth1"/>
    <property type="match status" value="1"/>
</dbReference>
<dbReference type="InterPro" id="IPR022631">
    <property type="entry name" value="ADOMET_SYNTHASE_CS"/>
</dbReference>
<dbReference type="InterPro" id="IPR022630">
    <property type="entry name" value="S-AdoMet_synt_C"/>
</dbReference>
<dbReference type="InterPro" id="IPR022629">
    <property type="entry name" value="S-AdoMet_synt_central"/>
</dbReference>
<dbReference type="InterPro" id="IPR022628">
    <property type="entry name" value="S-AdoMet_synt_N"/>
</dbReference>
<dbReference type="InterPro" id="IPR002133">
    <property type="entry name" value="S-AdoMet_synthetase"/>
</dbReference>
<dbReference type="InterPro" id="IPR022636">
    <property type="entry name" value="S-AdoMet_synthetase_sfam"/>
</dbReference>
<dbReference type="NCBIfam" id="TIGR01034">
    <property type="entry name" value="metK"/>
    <property type="match status" value="1"/>
</dbReference>
<dbReference type="PANTHER" id="PTHR11964">
    <property type="entry name" value="S-ADENOSYLMETHIONINE SYNTHETASE"/>
    <property type="match status" value="1"/>
</dbReference>
<dbReference type="Pfam" id="PF02773">
    <property type="entry name" value="S-AdoMet_synt_C"/>
    <property type="match status" value="1"/>
</dbReference>
<dbReference type="Pfam" id="PF02772">
    <property type="entry name" value="S-AdoMet_synt_M"/>
    <property type="match status" value="1"/>
</dbReference>
<dbReference type="Pfam" id="PF00438">
    <property type="entry name" value="S-AdoMet_synt_N"/>
    <property type="match status" value="1"/>
</dbReference>
<dbReference type="PIRSF" id="PIRSF000497">
    <property type="entry name" value="MAT"/>
    <property type="match status" value="1"/>
</dbReference>
<dbReference type="SUPFAM" id="SSF55973">
    <property type="entry name" value="S-adenosylmethionine synthetase"/>
    <property type="match status" value="3"/>
</dbReference>
<dbReference type="PROSITE" id="PS00376">
    <property type="entry name" value="ADOMET_SYNTHASE_1"/>
    <property type="match status" value="1"/>
</dbReference>
<dbReference type="PROSITE" id="PS00377">
    <property type="entry name" value="ADOMET_SYNTHASE_2"/>
    <property type="match status" value="1"/>
</dbReference>
<name>METK_MARMS</name>
<accession>A6W3D6</accession>
<reference key="1">
    <citation type="submission" date="2007-06" db="EMBL/GenBank/DDBJ databases">
        <title>Complete sequence of Marinomonas sp. MWYL1.</title>
        <authorList>
            <consortium name="US DOE Joint Genome Institute"/>
            <person name="Copeland A."/>
            <person name="Lucas S."/>
            <person name="Lapidus A."/>
            <person name="Barry K."/>
            <person name="Glavina del Rio T."/>
            <person name="Dalin E."/>
            <person name="Tice H."/>
            <person name="Pitluck S."/>
            <person name="Kiss H."/>
            <person name="Brettin T."/>
            <person name="Bruce D."/>
            <person name="Detter J.C."/>
            <person name="Han C."/>
            <person name="Schmutz J."/>
            <person name="Larimer F."/>
            <person name="Land M."/>
            <person name="Hauser L."/>
            <person name="Kyrpides N."/>
            <person name="Kim E."/>
            <person name="Johnston A.W.B."/>
            <person name="Todd J.D."/>
            <person name="Rogers R."/>
            <person name="Wexler M."/>
            <person name="Bond P.L."/>
            <person name="Li Y."/>
            <person name="Richardson P."/>
        </authorList>
    </citation>
    <scope>NUCLEOTIDE SEQUENCE [LARGE SCALE GENOMIC DNA]</scope>
    <source>
        <strain>MWYL1</strain>
    </source>
</reference>
<sequence length="387" mass="41738">MSEYSLFTSESVSEGHPDKIADQVSDAILDAILAEDPEARVACETLVKTGMVLVAGEVRTNAWVDIEEIARGVIREIGYNSSDMGFDWESCAVMNAIGKQSADIAVGVDEAGEHEQGAGDQGLMFGFATNETDVLMPAPITYAHRLVQRQAEVRKNGTLDFLRPDAKSQVTFRYDENGKPCAIDAVVLSTQHSASVKQADLREAVMEEIIKPVLPAEWLSKETKYFINPTGQFIIGGPVGDCGLTGRKIIVDTYGGMARHGGGAFSGKDPSKVDRSAAYAGRYVAKNIVAAGLADKCEIQISYAIGVAEPTSISINTFGTGKVSDAVISQLVREHFELRPAGLIKMLDLKRPIYLPTAAYGHFGREGENFTWEKTDKADALRKAAGL</sequence>
<feature type="chain" id="PRO_1000075380" description="S-adenosylmethionine synthase">
    <location>
        <begin position="1"/>
        <end position="387"/>
    </location>
</feature>
<feature type="region of interest" description="Flexible loop" evidence="1">
    <location>
        <begin position="100"/>
        <end position="110"/>
    </location>
</feature>
<feature type="binding site" description="in other chain" evidence="1">
    <location>
        <position position="16"/>
    </location>
    <ligand>
        <name>ATP</name>
        <dbReference type="ChEBI" id="CHEBI:30616"/>
        <note>ligand shared between two neighboring subunits</note>
    </ligand>
</feature>
<feature type="binding site" evidence="1">
    <location>
        <position position="18"/>
    </location>
    <ligand>
        <name>Mg(2+)</name>
        <dbReference type="ChEBI" id="CHEBI:18420"/>
    </ligand>
</feature>
<feature type="binding site" evidence="1">
    <location>
        <position position="44"/>
    </location>
    <ligand>
        <name>K(+)</name>
        <dbReference type="ChEBI" id="CHEBI:29103"/>
    </ligand>
</feature>
<feature type="binding site" description="in other chain" evidence="1">
    <location>
        <position position="57"/>
    </location>
    <ligand>
        <name>L-methionine</name>
        <dbReference type="ChEBI" id="CHEBI:57844"/>
        <note>ligand shared between two neighboring subunits</note>
    </ligand>
</feature>
<feature type="binding site" description="in other chain" evidence="1">
    <location>
        <position position="100"/>
    </location>
    <ligand>
        <name>L-methionine</name>
        <dbReference type="ChEBI" id="CHEBI:57844"/>
        <note>ligand shared between two neighboring subunits</note>
    </ligand>
</feature>
<feature type="binding site" description="in other chain" evidence="1">
    <location>
        <begin position="165"/>
        <end position="167"/>
    </location>
    <ligand>
        <name>ATP</name>
        <dbReference type="ChEBI" id="CHEBI:30616"/>
        <note>ligand shared between two neighboring subunits</note>
    </ligand>
</feature>
<feature type="binding site" evidence="1">
    <location>
        <position position="241"/>
    </location>
    <ligand>
        <name>ATP</name>
        <dbReference type="ChEBI" id="CHEBI:30616"/>
        <note>ligand shared between two neighboring subunits</note>
    </ligand>
</feature>
<feature type="binding site" evidence="1">
    <location>
        <position position="241"/>
    </location>
    <ligand>
        <name>L-methionine</name>
        <dbReference type="ChEBI" id="CHEBI:57844"/>
        <note>ligand shared between two neighboring subunits</note>
    </ligand>
</feature>
<feature type="binding site" description="in other chain" evidence="1">
    <location>
        <begin position="247"/>
        <end position="248"/>
    </location>
    <ligand>
        <name>ATP</name>
        <dbReference type="ChEBI" id="CHEBI:30616"/>
        <note>ligand shared between two neighboring subunits</note>
    </ligand>
</feature>
<feature type="binding site" evidence="1">
    <location>
        <position position="264"/>
    </location>
    <ligand>
        <name>ATP</name>
        <dbReference type="ChEBI" id="CHEBI:30616"/>
        <note>ligand shared between two neighboring subunits</note>
    </ligand>
</feature>
<feature type="binding site" evidence="1">
    <location>
        <position position="268"/>
    </location>
    <ligand>
        <name>ATP</name>
        <dbReference type="ChEBI" id="CHEBI:30616"/>
        <note>ligand shared between two neighboring subunits</note>
    </ligand>
</feature>
<feature type="binding site" description="in other chain" evidence="1">
    <location>
        <position position="272"/>
    </location>
    <ligand>
        <name>L-methionine</name>
        <dbReference type="ChEBI" id="CHEBI:57844"/>
        <note>ligand shared between two neighboring subunits</note>
    </ligand>
</feature>
<protein>
    <recommendedName>
        <fullName evidence="1">S-adenosylmethionine synthase</fullName>
        <shortName evidence="1">AdoMet synthase</shortName>
        <ecNumber evidence="1">2.5.1.6</ecNumber>
    </recommendedName>
    <alternativeName>
        <fullName evidence="1">MAT</fullName>
    </alternativeName>
    <alternativeName>
        <fullName evidence="1">Methionine adenosyltransferase</fullName>
    </alternativeName>
</protein>
<organism>
    <name type="scientific">Marinomonas sp. (strain MWYL1)</name>
    <dbReference type="NCBI Taxonomy" id="400668"/>
    <lineage>
        <taxon>Bacteria</taxon>
        <taxon>Pseudomonadati</taxon>
        <taxon>Pseudomonadota</taxon>
        <taxon>Gammaproteobacteria</taxon>
        <taxon>Oceanospirillales</taxon>
        <taxon>Oceanospirillaceae</taxon>
        <taxon>Marinomonas</taxon>
    </lineage>
</organism>